<feature type="chain" id="PRO_0000396513" description="Forkhead box protein O">
    <location>
        <begin position="1"/>
        <end position="628"/>
    </location>
</feature>
<feature type="DNA-binding region" description="Fork-head" evidence="3">
    <location>
        <begin position="95"/>
        <end position="201"/>
    </location>
</feature>
<feature type="region of interest" description="Disordered" evidence="4">
    <location>
        <begin position="39"/>
        <end position="77"/>
    </location>
</feature>
<feature type="region of interest" description="Disordered" evidence="4">
    <location>
        <begin position="182"/>
        <end position="205"/>
    </location>
</feature>
<feature type="region of interest" description="Disordered" evidence="4">
    <location>
        <begin position="217"/>
        <end position="269"/>
    </location>
</feature>
<feature type="region of interest" description="Disordered" evidence="4">
    <location>
        <begin position="316"/>
        <end position="359"/>
    </location>
</feature>
<feature type="region of interest" description="Disordered" evidence="4">
    <location>
        <begin position="389"/>
        <end position="415"/>
    </location>
</feature>
<feature type="compositionally biased region" description="Polar residues" evidence="4">
    <location>
        <begin position="63"/>
        <end position="77"/>
    </location>
</feature>
<feature type="compositionally biased region" description="Polar residues" evidence="4">
    <location>
        <begin position="221"/>
        <end position="230"/>
    </location>
</feature>
<feature type="compositionally biased region" description="Polar residues" evidence="4">
    <location>
        <begin position="256"/>
        <end position="265"/>
    </location>
</feature>
<feature type="compositionally biased region" description="Pro residues" evidence="4">
    <location>
        <begin position="328"/>
        <end position="337"/>
    </location>
</feature>
<feature type="compositionally biased region" description="Low complexity" evidence="4">
    <location>
        <begin position="338"/>
        <end position="351"/>
    </location>
</feature>
<feature type="compositionally biased region" description="Polar residues" evidence="4">
    <location>
        <begin position="402"/>
        <end position="414"/>
    </location>
</feature>
<feature type="modified residue" description="Phosphothreonine; by PKB/AKT1" evidence="2">
    <location>
        <position position="44"/>
    </location>
</feature>
<feature type="modified residue" description="Phosphoserine" evidence="2">
    <location>
        <position position="75"/>
    </location>
</feature>
<feature type="modified residue" description="Phosphoserine; by PKB/AKT1" evidence="2">
    <location>
        <position position="190"/>
    </location>
</feature>
<feature type="modified residue" description="Phosphoserine; by PKB/AKT1" evidence="2">
    <location>
        <position position="259"/>
    </location>
</feature>
<feature type="modified residue" description="Phosphoserine" evidence="2">
    <location>
        <position position="262"/>
    </location>
</feature>
<feature type="modified residue" description="Phosphoserine" evidence="2">
    <location>
        <position position="263"/>
    </location>
</feature>
<feature type="modified residue" description="Phosphoserine" evidence="2">
    <location>
        <position position="268"/>
    </location>
</feature>
<gene>
    <name evidence="2" type="primary">foxo</name>
    <name type="ORF">GE24216</name>
</gene>
<dbReference type="EMBL" id="CM000160">
    <property type="protein sequence ID" value="EDW97632.1"/>
    <property type="status" value="ALT_SEQ"/>
    <property type="molecule type" value="Genomic_DNA"/>
</dbReference>
<dbReference type="RefSeq" id="XP_002097920.2">
    <property type="nucleotide sequence ID" value="XM_002097884.2"/>
</dbReference>
<dbReference type="SMR" id="B4PTD3"/>
<dbReference type="EnsemblMetazoa" id="FBtr0394701">
    <property type="protein sequence ID" value="FBpp0354003"/>
    <property type="gene ID" value="FBgn0241347"/>
</dbReference>
<dbReference type="EnsemblMetazoa" id="XM_039376886.2">
    <property type="protein sequence ID" value="XP_039232820.1"/>
    <property type="gene ID" value="LOC6537363"/>
</dbReference>
<dbReference type="KEGG" id="dya:Dyak_GE24216"/>
<dbReference type="eggNOG" id="KOG2294">
    <property type="taxonomic scope" value="Eukaryota"/>
</dbReference>
<dbReference type="OrthoDB" id="5954824at2759"/>
<dbReference type="ChiTaRS" id="foxo">
    <property type="organism name" value="fly"/>
</dbReference>
<dbReference type="Proteomes" id="UP000002282">
    <property type="component" value="Chromosome 3R"/>
</dbReference>
<dbReference type="GO" id="GO:0005737">
    <property type="term" value="C:cytoplasm"/>
    <property type="evidence" value="ECO:0000250"/>
    <property type="project" value="UniProtKB"/>
</dbReference>
<dbReference type="GO" id="GO:0005634">
    <property type="term" value="C:nucleus"/>
    <property type="evidence" value="ECO:0000250"/>
    <property type="project" value="UniProtKB"/>
</dbReference>
<dbReference type="GO" id="GO:0003700">
    <property type="term" value="F:DNA-binding transcription factor activity"/>
    <property type="evidence" value="ECO:0000250"/>
    <property type="project" value="UniProtKB"/>
</dbReference>
<dbReference type="GO" id="GO:0000981">
    <property type="term" value="F:DNA-binding transcription factor activity, RNA polymerase II-specific"/>
    <property type="evidence" value="ECO:0007669"/>
    <property type="project" value="TreeGrafter"/>
</dbReference>
<dbReference type="GO" id="GO:0000978">
    <property type="term" value="F:RNA polymerase II cis-regulatory region sequence-specific DNA binding"/>
    <property type="evidence" value="ECO:0007669"/>
    <property type="project" value="TreeGrafter"/>
</dbReference>
<dbReference type="GO" id="GO:0030154">
    <property type="term" value="P:cell differentiation"/>
    <property type="evidence" value="ECO:0007669"/>
    <property type="project" value="UniProtKB-KW"/>
</dbReference>
<dbReference type="GO" id="GO:0042593">
    <property type="term" value="P:glucose homeostasis"/>
    <property type="evidence" value="ECO:0000250"/>
    <property type="project" value="UniProtKB"/>
</dbReference>
<dbReference type="GO" id="GO:0030308">
    <property type="term" value="P:negative regulation of cell growth"/>
    <property type="evidence" value="ECO:0000250"/>
    <property type="project" value="UniProtKB"/>
</dbReference>
<dbReference type="GO" id="GO:0008285">
    <property type="term" value="P:negative regulation of cell population proliferation"/>
    <property type="evidence" value="ECO:0000250"/>
    <property type="project" value="UniProtKB"/>
</dbReference>
<dbReference type="GO" id="GO:0046627">
    <property type="term" value="P:negative regulation of insulin receptor signaling pathway"/>
    <property type="evidence" value="ECO:0000250"/>
    <property type="project" value="UniProtKB"/>
</dbReference>
<dbReference type="GO" id="GO:0006355">
    <property type="term" value="P:regulation of DNA-templated transcription"/>
    <property type="evidence" value="ECO:0000250"/>
    <property type="project" value="UniProtKB"/>
</dbReference>
<dbReference type="GO" id="GO:0019216">
    <property type="term" value="P:regulation of lipid metabolic process"/>
    <property type="evidence" value="ECO:0000250"/>
    <property type="project" value="UniProtKB"/>
</dbReference>
<dbReference type="CDD" id="cd20032">
    <property type="entry name" value="FH_FOXO"/>
    <property type="match status" value="1"/>
</dbReference>
<dbReference type="FunFam" id="1.10.10.10:FF:000032">
    <property type="entry name" value="Forkhead box protein O4"/>
    <property type="match status" value="1"/>
</dbReference>
<dbReference type="Gene3D" id="1.10.10.10">
    <property type="entry name" value="Winged helix-like DNA-binding domain superfamily/Winged helix DNA-binding domain"/>
    <property type="match status" value="1"/>
</dbReference>
<dbReference type="InterPro" id="IPR001766">
    <property type="entry name" value="Fork_head_dom"/>
</dbReference>
<dbReference type="InterPro" id="IPR030456">
    <property type="entry name" value="TF_fork_head_CS_2"/>
</dbReference>
<dbReference type="InterPro" id="IPR036388">
    <property type="entry name" value="WH-like_DNA-bd_sf"/>
</dbReference>
<dbReference type="InterPro" id="IPR036390">
    <property type="entry name" value="WH_DNA-bd_sf"/>
</dbReference>
<dbReference type="PANTHER" id="PTHR45767">
    <property type="entry name" value="FORKHEAD BOX PROTEIN O"/>
    <property type="match status" value="1"/>
</dbReference>
<dbReference type="PANTHER" id="PTHR45767:SF2">
    <property type="entry name" value="FORKHEAD BOX PROTEIN O"/>
    <property type="match status" value="1"/>
</dbReference>
<dbReference type="Pfam" id="PF00250">
    <property type="entry name" value="Forkhead"/>
    <property type="match status" value="1"/>
</dbReference>
<dbReference type="PRINTS" id="PR00053">
    <property type="entry name" value="FORKHEAD"/>
</dbReference>
<dbReference type="SMART" id="SM00339">
    <property type="entry name" value="FH"/>
    <property type="match status" value="1"/>
</dbReference>
<dbReference type="SUPFAM" id="SSF46785">
    <property type="entry name" value="Winged helix' DNA-binding domain"/>
    <property type="match status" value="1"/>
</dbReference>
<dbReference type="PROSITE" id="PS00658">
    <property type="entry name" value="FORK_HEAD_2"/>
    <property type="match status" value="1"/>
</dbReference>
<dbReference type="PROSITE" id="PS50039">
    <property type="entry name" value="FORK_HEAD_3"/>
    <property type="match status" value="1"/>
</dbReference>
<accession>B4PTD3</accession>
<reference evidence="6" key="1">
    <citation type="journal article" date="2007" name="Nature">
        <title>Evolution of genes and genomes on the Drosophila phylogeny.</title>
        <authorList>
            <consortium name="Drosophila 12 genomes consortium"/>
        </authorList>
    </citation>
    <scope>NUCLEOTIDE SEQUENCE [LARGE SCALE GENOMIC DNA]</scope>
    <source>
        <strain evidence="6">Tai18E2 / Tucson 14021-0261.01</strain>
    </source>
</reference>
<name>FOXO_DROYA</name>
<proteinExistence type="inferred from homology"/>
<keyword id="KW-0010">Activator</keyword>
<keyword id="KW-0131">Cell cycle</keyword>
<keyword id="KW-0963">Cytoplasm</keyword>
<keyword id="KW-0217">Developmental protein</keyword>
<keyword id="KW-0221">Differentiation</keyword>
<keyword id="KW-0238">DNA-binding</keyword>
<keyword id="KW-0341">Growth regulation</keyword>
<keyword id="KW-0539">Nucleus</keyword>
<keyword id="KW-0597">Phosphoprotein</keyword>
<keyword id="KW-0804">Transcription</keyword>
<keyword id="KW-0805">Transcription regulation</keyword>
<sequence length="628" mass="68920">MMDGFAQDWPTLTHTDNGLAMDQLGGDLPLDVGFEPQTRARSNTWPCPRPENFVEPTDELDSTKASNQQLAPGDSQQAIQNANAAKKNSSRRNAWGNLSYADLITHAIGSATDKRLTLSQIYEWMVQNVPYFKDKGDSNSSAGWKNSIRHNLSLHNRFMRVQNEGTGKSSWWMLNPEAKPGKSVRRRAASMETSRYEKRRGRAKKRVEALRQAGVVGLNDATPSPSSSVSEGLDHFPESPLHSGGGFQLSPDFRQRASSNASSCGRLSPIRAQDLEPDWGFPVDYQNTTMTQAHAQALEELTCSVADELTLCTQQQQQGFSAASGLPSQPPPPPYQPPQHQQAQQQQSPYALNGPAPGYNTLQPQSQCLLHRSLNCSCMHNARDGLSPNSVTTTMSPAYPNSEPSSDSLNTYSNVVLDGPADTAALMVQQQQQQQQQQQQQQQQLSASLEGQCLEVLNNEAQPIDEFNLENFPVGNLECNVEELLQQEMSYGGLLDINIPLATVNTNLVNSSSGPLSISNISNISNISNLSNLSNISNISSNSGSSLNLNQLQAQLQQQQQQQQAQLQQQAQQQQQPHQQHQQQLLLNNNNNSSSSLELATQTASSNLNARVQYSQPSVVTSPPSWVH</sequence>
<evidence type="ECO:0000250" key="1"/>
<evidence type="ECO:0000250" key="2">
    <source>
        <dbReference type="UniProtKB" id="Q95V55"/>
    </source>
</evidence>
<evidence type="ECO:0000255" key="3">
    <source>
        <dbReference type="PROSITE-ProRule" id="PRU00089"/>
    </source>
</evidence>
<evidence type="ECO:0000256" key="4">
    <source>
        <dbReference type="SAM" id="MobiDB-lite"/>
    </source>
</evidence>
<evidence type="ECO:0000305" key="5"/>
<evidence type="ECO:0000312" key="6">
    <source>
        <dbReference type="EMBL" id="EDW97632.1"/>
    </source>
</evidence>
<comment type="function">
    <text evidence="1">Transcription factor involved in the regulation of the insulin signaling pathway. Consistently activates both the downstream target Thor\d4EBP and the feedback control target InR. Involved in negative regulation of the cell cycle, modulating cell growth and proliferation. In response to cellular stresses, such as nutrient deprivation or increased levels of reactive oxygen species, foxo is activated and inhibits growth through the action of target genes such as Thor. Foxo activated in the adult fat body can regulate lifespan in adults; an insulin peptide itself may function as one secondary messenger of insulin-regulated aging. Also regulates Lip4, homolog of human acid lipases, thereby acting as a key modulator of lipid metabolism by insulin signaling and integrates insulin responses to glucose and lipid homeostasis (By similarity).</text>
</comment>
<comment type="subunit">
    <text evidence="2">Interacts with melt.</text>
</comment>
<comment type="subcellular location">
    <subcellularLocation>
        <location evidence="2">Cytoplasm</location>
    </subcellularLocation>
    <subcellularLocation>
        <location evidence="2 3">Nucleus</location>
    </subcellularLocation>
    <text evidence="2">When phosphorylated, translocated from nucleus to cytoplasm. Dephosphorylation triggers nuclear translocation (By similarity).</text>
</comment>
<comment type="sequence caution" evidence="5">
    <conflict type="erroneous gene model prediction">
        <sequence resource="EMBL-CDS" id="EDW97632"/>
    </conflict>
</comment>
<protein>
    <recommendedName>
        <fullName evidence="2">Forkhead box protein O</fullName>
    </recommendedName>
</protein>
<organism>
    <name type="scientific">Drosophila yakuba</name>
    <name type="common">Fruit fly</name>
    <dbReference type="NCBI Taxonomy" id="7245"/>
    <lineage>
        <taxon>Eukaryota</taxon>
        <taxon>Metazoa</taxon>
        <taxon>Ecdysozoa</taxon>
        <taxon>Arthropoda</taxon>
        <taxon>Hexapoda</taxon>
        <taxon>Insecta</taxon>
        <taxon>Pterygota</taxon>
        <taxon>Neoptera</taxon>
        <taxon>Endopterygota</taxon>
        <taxon>Diptera</taxon>
        <taxon>Brachycera</taxon>
        <taxon>Muscomorpha</taxon>
        <taxon>Ephydroidea</taxon>
        <taxon>Drosophilidae</taxon>
        <taxon>Drosophila</taxon>
        <taxon>Sophophora</taxon>
    </lineage>
</organism>